<accession>Q5WYR3</accession>
<comment type="catalytic activity">
    <reaction evidence="1">
        <text>thymidine + ATP = dTMP + ADP + H(+)</text>
        <dbReference type="Rhea" id="RHEA:19129"/>
        <dbReference type="ChEBI" id="CHEBI:15378"/>
        <dbReference type="ChEBI" id="CHEBI:17748"/>
        <dbReference type="ChEBI" id="CHEBI:30616"/>
        <dbReference type="ChEBI" id="CHEBI:63528"/>
        <dbReference type="ChEBI" id="CHEBI:456216"/>
        <dbReference type="EC" id="2.7.1.21"/>
    </reaction>
</comment>
<comment type="subunit">
    <text evidence="1">Homotetramer.</text>
</comment>
<comment type="subcellular location">
    <subcellularLocation>
        <location evidence="1">Cytoplasm</location>
    </subcellularLocation>
</comment>
<comment type="similarity">
    <text evidence="1">Belongs to the thymidine kinase family.</text>
</comment>
<gene>
    <name evidence="1" type="primary">tdk</name>
    <name type="ordered locus">lpl0673</name>
</gene>
<organism>
    <name type="scientific">Legionella pneumophila (strain Lens)</name>
    <dbReference type="NCBI Taxonomy" id="297245"/>
    <lineage>
        <taxon>Bacteria</taxon>
        <taxon>Pseudomonadati</taxon>
        <taxon>Pseudomonadota</taxon>
        <taxon>Gammaproteobacteria</taxon>
        <taxon>Legionellales</taxon>
        <taxon>Legionellaceae</taxon>
        <taxon>Legionella</taxon>
    </lineage>
</organism>
<keyword id="KW-0067">ATP-binding</keyword>
<keyword id="KW-0963">Cytoplasm</keyword>
<keyword id="KW-0237">DNA synthesis</keyword>
<keyword id="KW-0418">Kinase</keyword>
<keyword id="KW-0479">Metal-binding</keyword>
<keyword id="KW-0547">Nucleotide-binding</keyword>
<keyword id="KW-0808">Transferase</keyword>
<keyword id="KW-0862">Zinc</keyword>
<feature type="chain" id="PRO_0000174987" description="Thymidine kinase">
    <location>
        <begin position="1"/>
        <end position="209"/>
    </location>
</feature>
<feature type="active site" description="Proton acceptor" evidence="1">
    <location>
        <position position="89"/>
    </location>
</feature>
<feature type="binding site" evidence="1">
    <location>
        <begin position="9"/>
        <end position="16"/>
    </location>
    <ligand>
        <name>ATP</name>
        <dbReference type="ChEBI" id="CHEBI:30616"/>
    </ligand>
</feature>
<feature type="binding site" evidence="1">
    <location>
        <begin position="88"/>
        <end position="91"/>
    </location>
    <ligand>
        <name>ATP</name>
        <dbReference type="ChEBI" id="CHEBI:30616"/>
    </ligand>
</feature>
<feature type="binding site" evidence="1">
    <location>
        <position position="146"/>
    </location>
    <ligand>
        <name>Zn(2+)</name>
        <dbReference type="ChEBI" id="CHEBI:29105"/>
    </ligand>
</feature>
<feature type="binding site" evidence="1">
    <location>
        <position position="148"/>
    </location>
    <ligand>
        <name>Zn(2+)</name>
        <dbReference type="ChEBI" id="CHEBI:29105"/>
    </ligand>
</feature>
<feature type="binding site" evidence="1">
    <location>
        <position position="183"/>
    </location>
    <ligand>
        <name>Zn(2+)</name>
        <dbReference type="ChEBI" id="CHEBI:29105"/>
    </ligand>
</feature>
<feature type="binding site" evidence="1">
    <location>
        <position position="186"/>
    </location>
    <ligand>
        <name>Zn(2+)</name>
        <dbReference type="ChEBI" id="CHEBI:29105"/>
    </ligand>
</feature>
<sequence length="209" mass="23798">MAKLYFYYAAMNAGKSTVLLQSSYNYRERGMQTLLFTPAIDTRYQYGTICSRIGLSEQAYAFNNTDNLYVLTQELQLQATKYSCVLIDEAQFLTREQVYQLTEITDQMSIPVLAYGLRTDFRGELFPGSQFLLAWADELIELKTICHCGRKATMNMRIDENGQAVVEGEQVLIGGNESYVATCRLHYKRGEAGKTFPGNKLFNKDTNTF</sequence>
<evidence type="ECO:0000255" key="1">
    <source>
        <dbReference type="HAMAP-Rule" id="MF_00124"/>
    </source>
</evidence>
<name>KITH_LEGPL</name>
<proteinExistence type="inferred from homology"/>
<dbReference type="EC" id="2.7.1.21" evidence="1"/>
<dbReference type="EMBL" id="CR628337">
    <property type="protein sequence ID" value="CAH14907.1"/>
    <property type="molecule type" value="Genomic_DNA"/>
</dbReference>
<dbReference type="RefSeq" id="WP_011214856.1">
    <property type="nucleotide sequence ID" value="NC_006369.1"/>
</dbReference>
<dbReference type="SMR" id="Q5WYR3"/>
<dbReference type="KEGG" id="lpf:lpl0673"/>
<dbReference type="LegioList" id="lpl0673"/>
<dbReference type="HOGENOM" id="CLU_064400_2_1_6"/>
<dbReference type="Proteomes" id="UP000002517">
    <property type="component" value="Chromosome"/>
</dbReference>
<dbReference type="GO" id="GO:0005829">
    <property type="term" value="C:cytosol"/>
    <property type="evidence" value="ECO:0007669"/>
    <property type="project" value="TreeGrafter"/>
</dbReference>
<dbReference type="GO" id="GO:0005524">
    <property type="term" value="F:ATP binding"/>
    <property type="evidence" value="ECO:0007669"/>
    <property type="project" value="UniProtKB-UniRule"/>
</dbReference>
<dbReference type="GO" id="GO:0004797">
    <property type="term" value="F:thymidine kinase activity"/>
    <property type="evidence" value="ECO:0007669"/>
    <property type="project" value="UniProtKB-UniRule"/>
</dbReference>
<dbReference type="GO" id="GO:0008270">
    <property type="term" value="F:zinc ion binding"/>
    <property type="evidence" value="ECO:0007669"/>
    <property type="project" value="UniProtKB-UniRule"/>
</dbReference>
<dbReference type="GO" id="GO:0071897">
    <property type="term" value="P:DNA biosynthetic process"/>
    <property type="evidence" value="ECO:0007669"/>
    <property type="project" value="UniProtKB-KW"/>
</dbReference>
<dbReference type="GO" id="GO:0046104">
    <property type="term" value="P:thymidine metabolic process"/>
    <property type="evidence" value="ECO:0007669"/>
    <property type="project" value="TreeGrafter"/>
</dbReference>
<dbReference type="FunFam" id="3.40.50.300:FF:000323">
    <property type="entry name" value="Thymidine kinase"/>
    <property type="match status" value="1"/>
</dbReference>
<dbReference type="Gene3D" id="3.30.60.20">
    <property type="match status" value="1"/>
</dbReference>
<dbReference type="Gene3D" id="3.40.50.300">
    <property type="entry name" value="P-loop containing nucleotide triphosphate hydrolases"/>
    <property type="match status" value="1"/>
</dbReference>
<dbReference type="HAMAP" id="MF_00124">
    <property type="entry name" value="Thymidine_kinase"/>
    <property type="match status" value="1"/>
</dbReference>
<dbReference type="InterPro" id="IPR027417">
    <property type="entry name" value="P-loop_NTPase"/>
</dbReference>
<dbReference type="InterPro" id="IPR001267">
    <property type="entry name" value="Thymidine_kinase"/>
</dbReference>
<dbReference type="InterPro" id="IPR020633">
    <property type="entry name" value="Thymidine_kinase_CS"/>
</dbReference>
<dbReference type="NCBIfam" id="NF003300">
    <property type="entry name" value="PRK04296.1-5"/>
    <property type="match status" value="1"/>
</dbReference>
<dbReference type="PANTHER" id="PTHR11441">
    <property type="entry name" value="THYMIDINE KINASE"/>
    <property type="match status" value="1"/>
</dbReference>
<dbReference type="PANTHER" id="PTHR11441:SF0">
    <property type="entry name" value="THYMIDINE KINASE, CYTOSOLIC"/>
    <property type="match status" value="1"/>
</dbReference>
<dbReference type="Pfam" id="PF00265">
    <property type="entry name" value="TK"/>
    <property type="match status" value="1"/>
</dbReference>
<dbReference type="PIRSF" id="PIRSF035805">
    <property type="entry name" value="TK_cell"/>
    <property type="match status" value="1"/>
</dbReference>
<dbReference type="SUPFAM" id="SSF57716">
    <property type="entry name" value="Glucocorticoid receptor-like (DNA-binding domain)"/>
    <property type="match status" value="1"/>
</dbReference>
<dbReference type="SUPFAM" id="SSF52540">
    <property type="entry name" value="P-loop containing nucleoside triphosphate hydrolases"/>
    <property type="match status" value="1"/>
</dbReference>
<dbReference type="PROSITE" id="PS00603">
    <property type="entry name" value="TK_CELLULAR_TYPE"/>
    <property type="match status" value="1"/>
</dbReference>
<reference key="1">
    <citation type="journal article" date="2004" name="Nat. Genet.">
        <title>Evidence in the Legionella pneumophila genome for exploitation of host cell functions and high genome plasticity.</title>
        <authorList>
            <person name="Cazalet C."/>
            <person name="Rusniok C."/>
            <person name="Brueggemann H."/>
            <person name="Zidane N."/>
            <person name="Magnier A."/>
            <person name="Ma L."/>
            <person name="Tichit M."/>
            <person name="Jarraud S."/>
            <person name="Bouchier C."/>
            <person name="Vandenesch F."/>
            <person name="Kunst F."/>
            <person name="Etienne J."/>
            <person name="Glaser P."/>
            <person name="Buchrieser C."/>
        </authorList>
    </citation>
    <scope>NUCLEOTIDE SEQUENCE [LARGE SCALE GENOMIC DNA]</scope>
    <source>
        <strain>Lens</strain>
    </source>
</reference>
<protein>
    <recommendedName>
        <fullName evidence="1">Thymidine kinase</fullName>
        <ecNumber evidence="1">2.7.1.21</ecNumber>
    </recommendedName>
</protein>